<gene>
    <name type="ordered locus">BLi03210</name>
    <name type="ordered locus">BL05307</name>
</gene>
<organism>
    <name type="scientific">Bacillus licheniformis (strain ATCC 14580 / DSM 13 / JCM 2505 / CCUG 7422 / NBRC 12200 / NCIMB 9375 / NCTC 10341 / NRRL NRS-1264 / Gibson 46)</name>
    <dbReference type="NCBI Taxonomy" id="279010"/>
    <lineage>
        <taxon>Bacteria</taxon>
        <taxon>Bacillati</taxon>
        <taxon>Bacillota</taxon>
        <taxon>Bacilli</taxon>
        <taxon>Bacillales</taxon>
        <taxon>Bacillaceae</taxon>
        <taxon>Bacillus</taxon>
    </lineage>
</organism>
<sequence>MKTVFLLLIRFYQKWISPALPPTCRFYPTCSNYGLEAIEKHGAFKGGWLTIKRILKCHPFHPGGIDPVPEKKQKD</sequence>
<accession>Q65FU4</accession>
<accession>Q62RA2</accession>
<protein>
    <recommendedName>
        <fullName evidence="1">Putative membrane protein insertion efficiency factor 2</fullName>
    </recommendedName>
</protein>
<dbReference type="EMBL" id="AE017333">
    <property type="protein sequence ID" value="AAU42070.1"/>
    <property type="molecule type" value="Genomic_DNA"/>
</dbReference>
<dbReference type="EMBL" id="CP000002">
    <property type="protein sequence ID" value="AAU24708.1"/>
    <property type="molecule type" value="Genomic_DNA"/>
</dbReference>
<dbReference type="STRING" id="279010.BL05307"/>
<dbReference type="KEGG" id="bld:BLi03210"/>
<dbReference type="KEGG" id="bli:BL05307"/>
<dbReference type="eggNOG" id="COG0759">
    <property type="taxonomic scope" value="Bacteria"/>
</dbReference>
<dbReference type="HOGENOM" id="CLU_144811_6_0_9"/>
<dbReference type="Proteomes" id="UP000000606">
    <property type="component" value="Chromosome"/>
</dbReference>
<dbReference type="GO" id="GO:0005886">
    <property type="term" value="C:plasma membrane"/>
    <property type="evidence" value="ECO:0007669"/>
    <property type="project" value="UniProtKB-SubCell"/>
</dbReference>
<dbReference type="HAMAP" id="MF_00386">
    <property type="entry name" value="UPF0161_YidD"/>
    <property type="match status" value="1"/>
</dbReference>
<dbReference type="InterPro" id="IPR002696">
    <property type="entry name" value="Membr_insert_effic_factor_YidD"/>
</dbReference>
<dbReference type="NCBIfam" id="TIGR00278">
    <property type="entry name" value="membrane protein insertion efficiency factor YidD"/>
    <property type="match status" value="1"/>
</dbReference>
<dbReference type="PANTHER" id="PTHR33383">
    <property type="entry name" value="MEMBRANE PROTEIN INSERTION EFFICIENCY FACTOR-RELATED"/>
    <property type="match status" value="1"/>
</dbReference>
<dbReference type="PANTHER" id="PTHR33383:SF1">
    <property type="entry name" value="MEMBRANE PROTEIN INSERTION EFFICIENCY FACTOR-RELATED"/>
    <property type="match status" value="1"/>
</dbReference>
<dbReference type="Pfam" id="PF01809">
    <property type="entry name" value="YidD"/>
    <property type="match status" value="1"/>
</dbReference>
<dbReference type="SMART" id="SM01234">
    <property type="entry name" value="Haemolytic"/>
    <property type="match status" value="1"/>
</dbReference>
<name>YIDD2_BACLD</name>
<feature type="chain" id="PRO_0000253076" description="Putative membrane protein insertion efficiency factor 2">
    <location>
        <begin position="1"/>
        <end position="75"/>
    </location>
</feature>
<evidence type="ECO:0000255" key="1">
    <source>
        <dbReference type="HAMAP-Rule" id="MF_00386"/>
    </source>
</evidence>
<comment type="function">
    <text evidence="1">Could be involved in insertion of integral membrane proteins into the membrane.</text>
</comment>
<comment type="subcellular location">
    <subcellularLocation>
        <location evidence="1">Cell membrane</location>
        <topology evidence="1">Peripheral membrane protein</topology>
        <orientation evidence="1">Cytoplasmic side</orientation>
    </subcellularLocation>
</comment>
<comment type="similarity">
    <text evidence="1">Belongs to the UPF0161 family.</text>
</comment>
<keyword id="KW-1003">Cell membrane</keyword>
<keyword id="KW-0472">Membrane</keyword>
<keyword id="KW-1185">Reference proteome</keyword>
<reference key="1">
    <citation type="journal article" date="2004" name="J. Mol. Microbiol. Biotechnol.">
        <title>The complete genome sequence of Bacillus licheniformis DSM13, an organism with great industrial potential.</title>
        <authorList>
            <person name="Veith B."/>
            <person name="Herzberg C."/>
            <person name="Steckel S."/>
            <person name="Feesche J."/>
            <person name="Maurer K.H."/>
            <person name="Ehrenreich P."/>
            <person name="Baeumer S."/>
            <person name="Henne A."/>
            <person name="Liesegang H."/>
            <person name="Merkl R."/>
            <person name="Ehrenreich A."/>
            <person name="Gottschalk G."/>
        </authorList>
    </citation>
    <scope>NUCLEOTIDE SEQUENCE [LARGE SCALE GENOMIC DNA]</scope>
    <source>
        <strain>ATCC 14580 / DSM 13 / JCM 2505 / CCUG 7422 / NBRC 12200 / NCIMB 9375 / NCTC 10341 / NRRL NRS-1264 / Gibson 46</strain>
    </source>
</reference>
<reference key="2">
    <citation type="journal article" date="2004" name="Genome Biol.">
        <title>Complete genome sequence of the industrial bacterium Bacillus licheniformis and comparisons with closely related Bacillus species.</title>
        <authorList>
            <person name="Rey M.W."/>
            <person name="Ramaiya P."/>
            <person name="Nelson B.A."/>
            <person name="Brody-Karpin S.D."/>
            <person name="Zaretsky E.J."/>
            <person name="Tang M."/>
            <person name="Lopez de Leon A."/>
            <person name="Xiang H."/>
            <person name="Gusti V."/>
            <person name="Clausen I.G."/>
            <person name="Olsen P.B."/>
            <person name="Rasmussen M.D."/>
            <person name="Andersen J.T."/>
            <person name="Joergensen P.L."/>
            <person name="Larsen T.S."/>
            <person name="Sorokin A."/>
            <person name="Bolotin A."/>
            <person name="Lapidus A."/>
            <person name="Galleron N."/>
            <person name="Ehrlich S.D."/>
            <person name="Berka R.M."/>
        </authorList>
    </citation>
    <scope>NUCLEOTIDE SEQUENCE [LARGE SCALE GENOMIC DNA]</scope>
    <source>
        <strain>ATCC 14580 / DSM 13 / JCM 2505 / CCUG 7422 / NBRC 12200 / NCIMB 9375 / NCTC 10341 / NRRL NRS-1264 / Gibson 46</strain>
    </source>
</reference>
<proteinExistence type="inferred from homology"/>